<name>IQCJ_MOUSE</name>
<proteinExistence type="predicted"/>
<reference key="1">
    <citation type="journal article" date="2005" name="Science">
        <title>The transcriptional landscape of the mammalian genome.</title>
        <authorList>
            <person name="Carninci P."/>
            <person name="Kasukawa T."/>
            <person name="Katayama S."/>
            <person name="Gough J."/>
            <person name="Frith M.C."/>
            <person name="Maeda N."/>
            <person name="Oyama R."/>
            <person name="Ravasi T."/>
            <person name="Lenhard B."/>
            <person name="Wells C."/>
            <person name="Kodzius R."/>
            <person name="Shimokawa K."/>
            <person name="Bajic V.B."/>
            <person name="Brenner S.E."/>
            <person name="Batalov S."/>
            <person name="Forrest A.R."/>
            <person name="Zavolan M."/>
            <person name="Davis M.J."/>
            <person name="Wilming L.G."/>
            <person name="Aidinis V."/>
            <person name="Allen J.E."/>
            <person name="Ambesi-Impiombato A."/>
            <person name="Apweiler R."/>
            <person name="Aturaliya R.N."/>
            <person name="Bailey T.L."/>
            <person name="Bansal M."/>
            <person name="Baxter L."/>
            <person name="Beisel K.W."/>
            <person name="Bersano T."/>
            <person name="Bono H."/>
            <person name="Chalk A.M."/>
            <person name="Chiu K.P."/>
            <person name="Choudhary V."/>
            <person name="Christoffels A."/>
            <person name="Clutterbuck D.R."/>
            <person name="Crowe M.L."/>
            <person name="Dalla E."/>
            <person name="Dalrymple B.P."/>
            <person name="de Bono B."/>
            <person name="Della Gatta G."/>
            <person name="di Bernardo D."/>
            <person name="Down T."/>
            <person name="Engstrom P."/>
            <person name="Fagiolini M."/>
            <person name="Faulkner G."/>
            <person name="Fletcher C.F."/>
            <person name="Fukushima T."/>
            <person name="Furuno M."/>
            <person name="Futaki S."/>
            <person name="Gariboldi M."/>
            <person name="Georgii-Hemming P."/>
            <person name="Gingeras T.R."/>
            <person name="Gojobori T."/>
            <person name="Green R.E."/>
            <person name="Gustincich S."/>
            <person name="Harbers M."/>
            <person name="Hayashi Y."/>
            <person name="Hensch T.K."/>
            <person name="Hirokawa N."/>
            <person name="Hill D."/>
            <person name="Huminiecki L."/>
            <person name="Iacono M."/>
            <person name="Ikeo K."/>
            <person name="Iwama A."/>
            <person name="Ishikawa T."/>
            <person name="Jakt M."/>
            <person name="Kanapin A."/>
            <person name="Katoh M."/>
            <person name="Kawasawa Y."/>
            <person name="Kelso J."/>
            <person name="Kitamura H."/>
            <person name="Kitano H."/>
            <person name="Kollias G."/>
            <person name="Krishnan S.P."/>
            <person name="Kruger A."/>
            <person name="Kummerfeld S.K."/>
            <person name="Kurochkin I.V."/>
            <person name="Lareau L.F."/>
            <person name="Lazarevic D."/>
            <person name="Lipovich L."/>
            <person name="Liu J."/>
            <person name="Liuni S."/>
            <person name="McWilliam S."/>
            <person name="Madan Babu M."/>
            <person name="Madera M."/>
            <person name="Marchionni L."/>
            <person name="Matsuda H."/>
            <person name="Matsuzawa S."/>
            <person name="Miki H."/>
            <person name="Mignone F."/>
            <person name="Miyake S."/>
            <person name="Morris K."/>
            <person name="Mottagui-Tabar S."/>
            <person name="Mulder N."/>
            <person name="Nakano N."/>
            <person name="Nakauchi H."/>
            <person name="Ng P."/>
            <person name="Nilsson R."/>
            <person name="Nishiguchi S."/>
            <person name="Nishikawa S."/>
            <person name="Nori F."/>
            <person name="Ohara O."/>
            <person name="Okazaki Y."/>
            <person name="Orlando V."/>
            <person name="Pang K.C."/>
            <person name="Pavan W.J."/>
            <person name="Pavesi G."/>
            <person name="Pesole G."/>
            <person name="Petrovsky N."/>
            <person name="Piazza S."/>
            <person name="Reed J."/>
            <person name="Reid J.F."/>
            <person name="Ring B.Z."/>
            <person name="Ringwald M."/>
            <person name="Rost B."/>
            <person name="Ruan Y."/>
            <person name="Salzberg S.L."/>
            <person name="Sandelin A."/>
            <person name="Schneider C."/>
            <person name="Schoenbach C."/>
            <person name="Sekiguchi K."/>
            <person name="Semple C.A."/>
            <person name="Seno S."/>
            <person name="Sessa L."/>
            <person name="Sheng Y."/>
            <person name="Shibata Y."/>
            <person name="Shimada H."/>
            <person name="Shimada K."/>
            <person name="Silva D."/>
            <person name="Sinclair B."/>
            <person name="Sperling S."/>
            <person name="Stupka E."/>
            <person name="Sugiura K."/>
            <person name="Sultana R."/>
            <person name="Takenaka Y."/>
            <person name="Taki K."/>
            <person name="Tammoja K."/>
            <person name="Tan S.L."/>
            <person name="Tang S."/>
            <person name="Taylor M.S."/>
            <person name="Tegner J."/>
            <person name="Teichmann S.A."/>
            <person name="Ueda H.R."/>
            <person name="van Nimwegen E."/>
            <person name="Verardo R."/>
            <person name="Wei C.L."/>
            <person name="Yagi K."/>
            <person name="Yamanishi H."/>
            <person name="Zabarovsky E."/>
            <person name="Zhu S."/>
            <person name="Zimmer A."/>
            <person name="Hide W."/>
            <person name="Bult C."/>
            <person name="Grimmond S.M."/>
            <person name="Teasdale R.D."/>
            <person name="Liu E.T."/>
            <person name="Brusic V."/>
            <person name="Quackenbush J."/>
            <person name="Wahlestedt C."/>
            <person name="Mattick J.S."/>
            <person name="Hume D.A."/>
            <person name="Kai C."/>
            <person name="Sasaki D."/>
            <person name="Tomaru Y."/>
            <person name="Fukuda S."/>
            <person name="Kanamori-Katayama M."/>
            <person name="Suzuki M."/>
            <person name="Aoki J."/>
            <person name="Arakawa T."/>
            <person name="Iida J."/>
            <person name="Imamura K."/>
            <person name="Itoh M."/>
            <person name="Kato T."/>
            <person name="Kawaji H."/>
            <person name="Kawagashira N."/>
            <person name="Kawashima T."/>
            <person name="Kojima M."/>
            <person name="Kondo S."/>
            <person name="Konno H."/>
            <person name="Nakano K."/>
            <person name="Ninomiya N."/>
            <person name="Nishio T."/>
            <person name="Okada M."/>
            <person name="Plessy C."/>
            <person name="Shibata K."/>
            <person name="Shiraki T."/>
            <person name="Suzuki S."/>
            <person name="Tagami M."/>
            <person name="Waki K."/>
            <person name="Watahiki A."/>
            <person name="Okamura-Oho Y."/>
            <person name="Suzuki H."/>
            <person name="Kawai J."/>
            <person name="Hayashizaki Y."/>
        </authorList>
    </citation>
    <scope>NUCLEOTIDE SEQUENCE [LARGE SCALE MRNA]</scope>
    <source>
        <strain>C57BL/6J</strain>
        <tissue>Eye</tissue>
    </source>
</reference>
<reference key="2">
    <citation type="journal article" date="2004" name="Genome Res.">
        <title>The status, quality, and expansion of the NIH full-length cDNA project: the Mammalian Gene Collection (MGC).</title>
        <authorList>
            <consortium name="The MGC Project Team"/>
        </authorList>
    </citation>
    <scope>NUCLEOTIDE SEQUENCE [LARGE SCALE MRNA]</scope>
</reference>
<reference key="3">
    <citation type="journal article" date="2008" name="J. Neurosci.">
        <title>Schwannomin-interacting protein-1 isoform IQCJ-SCHIP-1 is a late component of nodes of Ranvier and axon initial segments.</title>
        <authorList>
            <person name="Martin P.M."/>
            <person name="Carnaud M."/>
            <person name="Garcia del Cano G."/>
            <person name="Irondelle M."/>
            <person name="Irinopoulou T."/>
            <person name="Girault J.A."/>
            <person name="Dargent B."/>
            <person name="Goutebroze L."/>
        </authorList>
    </citation>
    <scope>ALTERNATIVE SPLICING</scope>
</reference>
<sequence length="110" mass="12662">MRLEELKRLQNPLEQVDDGKYLLENHQLAMDVENNIENYPLSLQPLESKVKIIQRAWREYLQRQDPLEKRSPSPPSVSSDKLSSSVSMNTFSDSSTPVSVSRPLAWTVLH</sequence>
<organism>
    <name type="scientific">Mus musculus</name>
    <name type="common">Mouse</name>
    <dbReference type="NCBI Taxonomy" id="10090"/>
    <lineage>
        <taxon>Eukaryota</taxon>
        <taxon>Metazoa</taxon>
        <taxon>Chordata</taxon>
        <taxon>Craniata</taxon>
        <taxon>Vertebrata</taxon>
        <taxon>Euteleostomi</taxon>
        <taxon>Mammalia</taxon>
        <taxon>Eutheria</taxon>
        <taxon>Euarchontoglires</taxon>
        <taxon>Glires</taxon>
        <taxon>Rodentia</taxon>
        <taxon>Myomorpha</taxon>
        <taxon>Muroidea</taxon>
        <taxon>Muridae</taxon>
        <taxon>Murinae</taxon>
        <taxon>Mus</taxon>
        <taxon>Mus</taxon>
    </lineage>
</organism>
<evidence type="ECO:0000256" key="1">
    <source>
        <dbReference type="SAM" id="MobiDB-lite"/>
    </source>
</evidence>
<evidence type="ECO:0000305" key="2"/>
<evidence type="ECO:0000312" key="3">
    <source>
        <dbReference type="MGI" id="MGI:3644166"/>
    </source>
</evidence>
<feature type="chain" id="PRO_0000315662" description="IQ domain-containing protein J">
    <location>
        <begin position="1"/>
        <end position="110"/>
    </location>
</feature>
<feature type="domain" description="IQ">
    <location>
        <begin position="47"/>
        <end position="67"/>
    </location>
</feature>
<feature type="region of interest" description="Disordered" evidence="1">
    <location>
        <begin position="63"/>
        <end position="99"/>
    </location>
</feature>
<feature type="compositionally biased region" description="Low complexity" evidence="1">
    <location>
        <begin position="76"/>
        <end position="87"/>
    </location>
</feature>
<feature type="compositionally biased region" description="Polar residues" evidence="1">
    <location>
        <begin position="88"/>
        <end position="99"/>
    </location>
</feature>
<comment type="alternative products">
    <event type="alternative splicing"/>
    <isoform>
        <id>Q8BPW0-1</id>
        <name>Iqcj-1</name>
        <sequence type="displayed"/>
    </isoform>
    <isoform>
        <id>A0A088MLT8-1</id>
        <name>Iqcj-schip1-1</name>
        <name>IQCJ-SCHIP-1</name>
        <sequence type="external"/>
    </isoform>
    <isoform>
        <id>A0A088MLT8-2</id>
        <name>Iqcj-schip1-2</name>
        <sequence type="external"/>
    </isoform>
</comment>
<accession>Q8BPW0</accession>
<protein>
    <recommendedName>
        <fullName evidence="2">IQ domain-containing protein J</fullName>
    </recommendedName>
</protein>
<keyword id="KW-0025">Alternative splicing</keyword>
<keyword id="KW-1185">Reference proteome</keyword>
<gene>
    <name evidence="3" type="primary">Iqcj</name>
</gene>
<dbReference type="EMBL" id="AK052136">
    <property type="protein sequence ID" value="BAC34854.1"/>
    <property type="molecule type" value="mRNA"/>
</dbReference>
<dbReference type="EMBL" id="BC107305">
    <property type="protein sequence ID" value="AAI07306.1"/>
    <property type="molecule type" value="mRNA"/>
</dbReference>
<dbReference type="EMBL" id="BC107306">
    <property type="protein sequence ID" value="AAI07307.1"/>
    <property type="molecule type" value="mRNA"/>
</dbReference>
<dbReference type="CCDS" id="CCDS57217.1">
    <molecule id="Q8BPW0-1"/>
</dbReference>
<dbReference type="RefSeq" id="NP_808253.1">
    <molecule id="Q8BPW0-1"/>
    <property type="nucleotide sequence ID" value="NM_177585.3"/>
</dbReference>
<dbReference type="STRING" id="10090.ENSMUSP00000069544"/>
<dbReference type="PhosphoSitePlus" id="Q8BPW0"/>
<dbReference type="PaxDb" id="10090-ENSMUSP00000069544"/>
<dbReference type="Antibodypedia" id="54183">
    <property type="antibodies" value="139 antibodies from 19 providers"/>
</dbReference>
<dbReference type="Ensembl" id="ENSMUST00000063263.5">
    <molecule id="Q8BPW0-1"/>
    <property type="protein sequence ID" value="ENSMUSP00000069544.4"/>
    <property type="gene ID" value="ENSMUSG00000051777.7"/>
</dbReference>
<dbReference type="GeneID" id="208426"/>
<dbReference type="KEGG" id="mmu:208426"/>
<dbReference type="UCSC" id="uc008plq.1">
    <molecule id="Q8BPW0-1"/>
    <property type="organism name" value="mouse"/>
</dbReference>
<dbReference type="AGR" id="MGI:3644166"/>
<dbReference type="CTD" id="654502"/>
<dbReference type="MGI" id="MGI:3644166">
    <property type="gene designation" value="Iqcj"/>
</dbReference>
<dbReference type="VEuPathDB" id="HostDB:ENSMUSG00000051777"/>
<dbReference type="eggNOG" id="ENOG502S3HE">
    <property type="taxonomic scope" value="Eukaryota"/>
</dbReference>
<dbReference type="GeneTree" id="ENSGT00390000000847"/>
<dbReference type="HOGENOM" id="CLU_150757_0_0_1"/>
<dbReference type="InParanoid" id="Q8BPW0"/>
<dbReference type="OMA" id="QANDGKY"/>
<dbReference type="OrthoDB" id="8932997at2759"/>
<dbReference type="PhylomeDB" id="Q8BPW0"/>
<dbReference type="TreeFam" id="TF336256"/>
<dbReference type="BioGRID-ORCS" id="208426">
    <property type="hits" value="0 hits in 73 CRISPR screens"/>
</dbReference>
<dbReference type="Proteomes" id="UP000000589">
    <property type="component" value="Chromosome 3"/>
</dbReference>
<dbReference type="RNAct" id="Q8BPW0">
    <property type="molecule type" value="protein"/>
</dbReference>
<dbReference type="Bgee" id="ENSMUSG00000051777">
    <property type="expression patterns" value="Expressed in floor plate and 20 other cell types or tissues"/>
</dbReference>
<dbReference type="InterPro" id="IPR053113">
    <property type="entry name" value="IQ_domain_protein"/>
</dbReference>
<dbReference type="InterPro" id="IPR029362">
    <property type="entry name" value="IQCJ-SCHIP1_N"/>
</dbReference>
<dbReference type="PANTHER" id="PTHR35976">
    <property type="entry name" value="IQ DOMAIN-CONTAINING PROTEIN J"/>
    <property type="match status" value="1"/>
</dbReference>
<dbReference type="PANTHER" id="PTHR35976:SF1">
    <property type="entry name" value="IQ DOMAIN-CONTAINING PROTEIN J"/>
    <property type="match status" value="1"/>
</dbReference>
<dbReference type="Pfam" id="PF15157">
    <property type="entry name" value="IQCJ-SCHIP1"/>
    <property type="match status" value="1"/>
</dbReference>